<dbReference type="PIR" id="A25357">
    <property type="entry name" value="A25357"/>
</dbReference>
<dbReference type="SMR" id="P11757"/>
<dbReference type="GO" id="GO:0072562">
    <property type="term" value="C:blood microparticle"/>
    <property type="evidence" value="ECO:0007669"/>
    <property type="project" value="TreeGrafter"/>
</dbReference>
<dbReference type="GO" id="GO:0031838">
    <property type="term" value="C:haptoglobin-hemoglobin complex"/>
    <property type="evidence" value="ECO:0007669"/>
    <property type="project" value="TreeGrafter"/>
</dbReference>
<dbReference type="GO" id="GO:0005833">
    <property type="term" value="C:hemoglobin complex"/>
    <property type="evidence" value="ECO:0007669"/>
    <property type="project" value="InterPro"/>
</dbReference>
<dbReference type="GO" id="GO:0031720">
    <property type="term" value="F:haptoglobin binding"/>
    <property type="evidence" value="ECO:0007669"/>
    <property type="project" value="TreeGrafter"/>
</dbReference>
<dbReference type="GO" id="GO:0020037">
    <property type="term" value="F:heme binding"/>
    <property type="evidence" value="ECO:0007669"/>
    <property type="project" value="InterPro"/>
</dbReference>
<dbReference type="GO" id="GO:0005506">
    <property type="term" value="F:iron ion binding"/>
    <property type="evidence" value="ECO:0007669"/>
    <property type="project" value="InterPro"/>
</dbReference>
<dbReference type="GO" id="GO:0043177">
    <property type="term" value="F:organic acid binding"/>
    <property type="evidence" value="ECO:0007669"/>
    <property type="project" value="TreeGrafter"/>
</dbReference>
<dbReference type="GO" id="GO:0019825">
    <property type="term" value="F:oxygen binding"/>
    <property type="evidence" value="ECO:0007669"/>
    <property type="project" value="InterPro"/>
</dbReference>
<dbReference type="GO" id="GO:0005344">
    <property type="term" value="F:oxygen carrier activity"/>
    <property type="evidence" value="ECO:0007669"/>
    <property type="project" value="UniProtKB-KW"/>
</dbReference>
<dbReference type="GO" id="GO:0004601">
    <property type="term" value="F:peroxidase activity"/>
    <property type="evidence" value="ECO:0007669"/>
    <property type="project" value="TreeGrafter"/>
</dbReference>
<dbReference type="GO" id="GO:0042744">
    <property type="term" value="P:hydrogen peroxide catabolic process"/>
    <property type="evidence" value="ECO:0007669"/>
    <property type="project" value="TreeGrafter"/>
</dbReference>
<dbReference type="CDD" id="cd08927">
    <property type="entry name" value="Hb-alpha-like"/>
    <property type="match status" value="1"/>
</dbReference>
<dbReference type="FunFam" id="1.10.490.10:FF:000002">
    <property type="entry name" value="Hemoglobin subunit alpha"/>
    <property type="match status" value="1"/>
</dbReference>
<dbReference type="Gene3D" id="1.10.490.10">
    <property type="entry name" value="Globins"/>
    <property type="match status" value="1"/>
</dbReference>
<dbReference type="InterPro" id="IPR000971">
    <property type="entry name" value="Globin"/>
</dbReference>
<dbReference type="InterPro" id="IPR009050">
    <property type="entry name" value="Globin-like_sf"/>
</dbReference>
<dbReference type="InterPro" id="IPR012292">
    <property type="entry name" value="Globin/Proto"/>
</dbReference>
<dbReference type="InterPro" id="IPR002338">
    <property type="entry name" value="Hemoglobin_a-typ"/>
</dbReference>
<dbReference type="InterPro" id="IPR050056">
    <property type="entry name" value="Hemoglobin_oxygen_transport"/>
</dbReference>
<dbReference type="InterPro" id="IPR002339">
    <property type="entry name" value="Hemoglobin_pi"/>
</dbReference>
<dbReference type="PANTHER" id="PTHR11442">
    <property type="entry name" value="HEMOGLOBIN FAMILY MEMBER"/>
    <property type="match status" value="1"/>
</dbReference>
<dbReference type="PANTHER" id="PTHR11442:SF48">
    <property type="entry name" value="HEMOGLOBIN SUBUNIT ALPHA"/>
    <property type="match status" value="1"/>
</dbReference>
<dbReference type="Pfam" id="PF00042">
    <property type="entry name" value="Globin"/>
    <property type="match status" value="1"/>
</dbReference>
<dbReference type="PRINTS" id="PR00612">
    <property type="entry name" value="ALPHAHAEM"/>
</dbReference>
<dbReference type="PRINTS" id="PR00815">
    <property type="entry name" value="PIHAEM"/>
</dbReference>
<dbReference type="SUPFAM" id="SSF46458">
    <property type="entry name" value="Globin-like"/>
    <property type="match status" value="1"/>
</dbReference>
<dbReference type="PROSITE" id="PS01033">
    <property type="entry name" value="GLOBIN"/>
    <property type="match status" value="1"/>
</dbReference>
<protein>
    <recommendedName>
        <fullName>Hemoglobin subunit alpha</fullName>
    </recommendedName>
    <alternativeName>
        <fullName>Alpha-globin</fullName>
    </alternativeName>
    <alternativeName>
        <fullName>Hemoglobin alpha chain</fullName>
    </alternativeName>
    <component>
        <recommendedName>
            <fullName evidence="2">Hemopressin</fullName>
        </recommendedName>
    </component>
</protein>
<sequence>VLSPADKTNIKAAWDKVGAHAGDYGAEALERMFLSFPTTKTYFPHFDLSHGSAQVKGHGKKVGDALGNAVAHMDDLPGALSALSDLHAYKLRVDPVNFKLLSHCLLVTLACHLPGEFTPAIHASLDKFLASVSTVLVSKYR</sequence>
<proteinExistence type="evidence at protein level"/>
<gene>
    <name type="primary">HBA</name>
</gene>
<reference key="1">
    <citation type="journal article" date="1986" name="Biol. Chem. Hoppe-Seyler">
        <title>The primary structure of a mouse-eared bat (Myotis velifer, Chiroptera) hemoglobin.</title>
        <authorList>
            <person name="Kleinschmidt T."/>
            <person name="Koop B."/>
            <person name="Braunitzer G."/>
        </authorList>
    </citation>
    <scope>PROTEIN SEQUENCE</scope>
</reference>
<organism>
    <name type="scientific">Myotis velifer</name>
    <name type="common">Mouse-eared bat</name>
    <name type="synonym">Cave bat</name>
    <dbReference type="NCBI Taxonomy" id="9435"/>
    <lineage>
        <taxon>Eukaryota</taxon>
        <taxon>Metazoa</taxon>
        <taxon>Chordata</taxon>
        <taxon>Craniata</taxon>
        <taxon>Vertebrata</taxon>
        <taxon>Euteleostomi</taxon>
        <taxon>Mammalia</taxon>
        <taxon>Eutheria</taxon>
        <taxon>Laurasiatheria</taxon>
        <taxon>Chiroptera</taxon>
        <taxon>Yangochiroptera</taxon>
        <taxon>Vespertilionidae</taxon>
        <taxon>Myotis</taxon>
    </lineage>
</organism>
<feature type="chain" id="PRO_0000052699" description="Hemoglobin subunit alpha">
    <location>
        <begin position="1"/>
        <end position="141"/>
    </location>
</feature>
<feature type="peptide" id="PRO_0000455907" description="Hemopressin" evidence="2">
    <location>
        <begin position="95"/>
        <end position="103"/>
    </location>
</feature>
<feature type="domain" description="Globin" evidence="4">
    <location>
        <begin position="1"/>
        <end position="141"/>
    </location>
</feature>
<feature type="binding site" evidence="4">
    <location>
        <position position="58"/>
    </location>
    <ligand>
        <name>O2</name>
        <dbReference type="ChEBI" id="CHEBI:15379"/>
    </ligand>
</feature>
<feature type="binding site" description="proximal binding residue" evidence="4">
    <location>
        <position position="87"/>
    </location>
    <ligand>
        <name>heme b</name>
        <dbReference type="ChEBI" id="CHEBI:60344"/>
    </ligand>
    <ligandPart>
        <name>Fe</name>
        <dbReference type="ChEBI" id="CHEBI:18248"/>
    </ligandPart>
</feature>
<feature type="modified residue" description="Phosphoserine" evidence="3">
    <location>
        <position position="3"/>
    </location>
</feature>
<feature type="modified residue" description="N6-succinyllysine" evidence="1">
    <location>
        <position position="7"/>
    </location>
</feature>
<feature type="modified residue" description="Phosphothreonine" evidence="3">
    <location>
        <position position="8"/>
    </location>
</feature>
<feature type="modified residue" description="N6-succinyllysine" evidence="1">
    <location>
        <position position="11"/>
    </location>
</feature>
<feature type="modified residue" description="N6-acetyllysine; alternate" evidence="3">
    <location>
        <position position="16"/>
    </location>
</feature>
<feature type="modified residue" description="N6-succinyllysine; alternate" evidence="1">
    <location>
        <position position="16"/>
    </location>
</feature>
<feature type="modified residue" description="Phosphotyrosine" evidence="3">
    <location>
        <position position="24"/>
    </location>
</feature>
<feature type="modified residue" description="Phosphoserine" evidence="3">
    <location>
        <position position="35"/>
    </location>
</feature>
<feature type="modified residue" description="N6-succinyllysine" evidence="1">
    <location>
        <position position="40"/>
    </location>
</feature>
<feature type="modified residue" description="Phosphoserine" evidence="3">
    <location>
        <position position="49"/>
    </location>
</feature>
<feature type="modified residue" description="Phosphoserine" evidence="1">
    <location>
        <position position="102"/>
    </location>
</feature>
<feature type="modified residue" description="Phosphothreonine" evidence="1">
    <location>
        <position position="108"/>
    </location>
</feature>
<feature type="modified residue" description="Phosphoserine" evidence="1">
    <location>
        <position position="124"/>
    </location>
</feature>
<feature type="modified residue" description="Phosphoserine" evidence="1">
    <location>
        <position position="131"/>
    </location>
</feature>
<feature type="modified residue" description="Phosphothreonine" evidence="1">
    <location>
        <position position="134"/>
    </location>
</feature>
<feature type="modified residue" description="Phosphoserine" evidence="1">
    <location>
        <position position="138"/>
    </location>
</feature>
<accession>P11757</accession>
<keyword id="KW-0007">Acetylation</keyword>
<keyword id="KW-0903">Direct protein sequencing</keyword>
<keyword id="KW-0349">Heme</keyword>
<keyword id="KW-0408">Iron</keyword>
<keyword id="KW-0479">Metal-binding</keyword>
<keyword id="KW-0561">Oxygen transport</keyword>
<keyword id="KW-0597">Phosphoprotein</keyword>
<keyword id="KW-0813">Transport</keyword>
<comment type="function">
    <text>Involved in oxygen transport from the lung to the various peripheral tissues.</text>
</comment>
<comment type="function">
    <molecule>Hemopressin</molecule>
    <text evidence="2">Hemopressin acts as an antagonist peptide of the cannabinoid receptor CNR1. Hemopressin-binding efficiently blocks cannabinoid receptor CNR1 and subsequent signaling.</text>
</comment>
<comment type="subunit">
    <text>Heterotetramer of two alpha chains and two beta chains.</text>
</comment>
<comment type="tissue specificity">
    <text>Red blood cells.</text>
</comment>
<comment type="similarity">
    <text evidence="4">Belongs to the globin family.</text>
</comment>
<evidence type="ECO:0000250" key="1">
    <source>
        <dbReference type="UniProtKB" id="P01942"/>
    </source>
</evidence>
<evidence type="ECO:0000250" key="2">
    <source>
        <dbReference type="UniProtKB" id="P01946"/>
    </source>
</evidence>
<evidence type="ECO:0000250" key="3">
    <source>
        <dbReference type="UniProtKB" id="P69905"/>
    </source>
</evidence>
<evidence type="ECO:0000255" key="4">
    <source>
        <dbReference type="PROSITE-ProRule" id="PRU00238"/>
    </source>
</evidence>
<name>HBA_MYOVE</name>